<protein>
    <recommendedName>
        <fullName evidence="1">NADH-quinone oxidoreductase subunit N</fullName>
        <ecNumber evidence="1">7.1.1.-</ecNumber>
    </recommendedName>
    <alternativeName>
        <fullName evidence="1">NADH dehydrogenase I subunit N</fullName>
    </alternativeName>
    <alternativeName>
        <fullName evidence="1">NDH-1 subunit N</fullName>
    </alternativeName>
</protein>
<name>NUON_ECO55</name>
<proteinExistence type="inferred from homology"/>
<gene>
    <name evidence="1" type="primary">nuoN</name>
    <name type="ordered locus">EC55989_2520</name>
</gene>
<evidence type="ECO:0000255" key="1">
    <source>
        <dbReference type="HAMAP-Rule" id="MF_00445"/>
    </source>
</evidence>
<accession>B7LAT8</accession>
<sequence>MTITPQNLIALLPLLIVGLTVVVVMLSIAWRRNHFLNATLSVIGLNAALVSLWFVGQAGAMDVTPLMRVDGFAMLYTGLVLLASLATCTFAYPWLEGYNDNKDEFYLLVLIAALGGILLANANHLASLFLGIELISLPLFGLVGYAFRQKRSLEASIKYTILSAAASSFLLFGMALVYAQSGDLSFVALGKNLGDGMLNEPLLLAGFGLMIVGLGFKLSLVPFHLWTPDVYQGAPAPVSTFLATASKIAIFGVVMRLFLYAPVGDSEAIRVVLAIIAFASIIFGNLMALSQTNIKRLLGYSSISHLGYLLVALIALQTGEMSMEAVGVYLAGYLFSSLGAFGVVSLMSSPYRGPDADSLFSYRGLFWHRPILAAVMTVMMLSLAGIPMTLGFIGKFYVLAVGVQAHLWWLVGAVVVGSAIGLYYYLRVAVSLYLHAPEQPGRDAPSNWQYSAGGIVVLISALLVLVLGVWPQPLISIVRLAMPLM</sequence>
<feature type="chain" id="PRO_1000184915" description="NADH-quinone oxidoreductase subunit N">
    <location>
        <begin position="1"/>
        <end position="485"/>
    </location>
</feature>
<feature type="transmembrane region" description="Helical" evidence="1">
    <location>
        <begin position="8"/>
        <end position="28"/>
    </location>
</feature>
<feature type="transmembrane region" description="Helical" evidence="1">
    <location>
        <begin position="35"/>
        <end position="55"/>
    </location>
</feature>
<feature type="transmembrane region" description="Helical" evidence="1">
    <location>
        <begin position="71"/>
        <end position="91"/>
    </location>
</feature>
<feature type="transmembrane region" description="Helical" evidence="1">
    <location>
        <begin position="105"/>
        <end position="125"/>
    </location>
</feature>
<feature type="transmembrane region" description="Helical" evidence="1">
    <location>
        <begin position="127"/>
        <end position="147"/>
    </location>
</feature>
<feature type="transmembrane region" description="Helical" evidence="1">
    <location>
        <begin position="159"/>
        <end position="179"/>
    </location>
</feature>
<feature type="transmembrane region" description="Helical" evidence="1">
    <location>
        <begin position="203"/>
        <end position="223"/>
    </location>
</feature>
<feature type="transmembrane region" description="Helical" evidence="1">
    <location>
        <begin position="235"/>
        <end position="255"/>
    </location>
</feature>
<feature type="transmembrane region" description="Helical" evidence="1">
    <location>
        <begin position="271"/>
        <end position="291"/>
    </location>
</feature>
<feature type="transmembrane region" description="Helical" evidence="1">
    <location>
        <begin position="297"/>
        <end position="317"/>
    </location>
</feature>
<feature type="transmembrane region" description="Helical" evidence="1">
    <location>
        <begin position="326"/>
        <end position="346"/>
    </location>
</feature>
<feature type="transmembrane region" description="Helical" evidence="1">
    <location>
        <begin position="373"/>
        <end position="393"/>
    </location>
</feature>
<feature type="transmembrane region" description="Helical" evidence="1">
    <location>
        <begin position="408"/>
        <end position="430"/>
    </location>
</feature>
<feature type="transmembrane region" description="Helical" evidence="1">
    <location>
        <begin position="455"/>
        <end position="475"/>
    </location>
</feature>
<organism>
    <name type="scientific">Escherichia coli (strain 55989 / EAEC)</name>
    <dbReference type="NCBI Taxonomy" id="585055"/>
    <lineage>
        <taxon>Bacteria</taxon>
        <taxon>Pseudomonadati</taxon>
        <taxon>Pseudomonadota</taxon>
        <taxon>Gammaproteobacteria</taxon>
        <taxon>Enterobacterales</taxon>
        <taxon>Enterobacteriaceae</taxon>
        <taxon>Escherichia</taxon>
    </lineage>
</organism>
<reference key="1">
    <citation type="journal article" date="2009" name="PLoS Genet.">
        <title>Organised genome dynamics in the Escherichia coli species results in highly diverse adaptive paths.</title>
        <authorList>
            <person name="Touchon M."/>
            <person name="Hoede C."/>
            <person name="Tenaillon O."/>
            <person name="Barbe V."/>
            <person name="Baeriswyl S."/>
            <person name="Bidet P."/>
            <person name="Bingen E."/>
            <person name="Bonacorsi S."/>
            <person name="Bouchier C."/>
            <person name="Bouvet O."/>
            <person name="Calteau A."/>
            <person name="Chiapello H."/>
            <person name="Clermont O."/>
            <person name="Cruveiller S."/>
            <person name="Danchin A."/>
            <person name="Diard M."/>
            <person name="Dossat C."/>
            <person name="Karoui M.E."/>
            <person name="Frapy E."/>
            <person name="Garry L."/>
            <person name="Ghigo J.M."/>
            <person name="Gilles A.M."/>
            <person name="Johnson J."/>
            <person name="Le Bouguenec C."/>
            <person name="Lescat M."/>
            <person name="Mangenot S."/>
            <person name="Martinez-Jehanne V."/>
            <person name="Matic I."/>
            <person name="Nassif X."/>
            <person name="Oztas S."/>
            <person name="Petit M.A."/>
            <person name="Pichon C."/>
            <person name="Rouy Z."/>
            <person name="Ruf C.S."/>
            <person name="Schneider D."/>
            <person name="Tourret J."/>
            <person name="Vacherie B."/>
            <person name="Vallenet D."/>
            <person name="Medigue C."/>
            <person name="Rocha E.P.C."/>
            <person name="Denamur E."/>
        </authorList>
    </citation>
    <scope>NUCLEOTIDE SEQUENCE [LARGE SCALE GENOMIC DNA]</scope>
    <source>
        <strain>55989 / EAEC</strain>
    </source>
</reference>
<dbReference type="EC" id="7.1.1.-" evidence="1"/>
<dbReference type="EMBL" id="CU928145">
    <property type="protein sequence ID" value="CAU98388.1"/>
    <property type="molecule type" value="Genomic_DNA"/>
</dbReference>
<dbReference type="RefSeq" id="WP_000156701.1">
    <property type="nucleotide sequence ID" value="NZ_CP028304.1"/>
</dbReference>
<dbReference type="SMR" id="B7LAT8"/>
<dbReference type="GeneID" id="75205678"/>
<dbReference type="KEGG" id="eck:EC55989_2520"/>
<dbReference type="HOGENOM" id="CLU_007100_1_5_6"/>
<dbReference type="Proteomes" id="UP000000746">
    <property type="component" value="Chromosome"/>
</dbReference>
<dbReference type="GO" id="GO:0005886">
    <property type="term" value="C:plasma membrane"/>
    <property type="evidence" value="ECO:0007669"/>
    <property type="project" value="UniProtKB-SubCell"/>
</dbReference>
<dbReference type="GO" id="GO:0008137">
    <property type="term" value="F:NADH dehydrogenase (ubiquinone) activity"/>
    <property type="evidence" value="ECO:0007669"/>
    <property type="project" value="InterPro"/>
</dbReference>
<dbReference type="GO" id="GO:0050136">
    <property type="term" value="F:NADH:ubiquinone reductase (non-electrogenic) activity"/>
    <property type="evidence" value="ECO:0007669"/>
    <property type="project" value="UniProtKB-UniRule"/>
</dbReference>
<dbReference type="GO" id="GO:0048038">
    <property type="term" value="F:quinone binding"/>
    <property type="evidence" value="ECO:0007669"/>
    <property type="project" value="UniProtKB-KW"/>
</dbReference>
<dbReference type="GO" id="GO:0042773">
    <property type="term" value="P:ATP synthesis coupled electron transport"/>
    <property type="evidence" value="ECO:0007669"/>
    <property type="project" value="InterPro"/>
</dbReference>
<dbReference type="HAMAP" id="MF_00445">
    <property type="entry name" value="NDH1_NuoN_1"/>
    <property type="match status" value="1"/>
</dbReference>
<dbReference type="InterPro" id="IPR010096">
    <property type="entry name" value="NADH-Q_OxRdtase_suN/2"/>
</dbReference>
<dbReference type="InterPro" id="IPR001750">
    <property type="entry name" value="ND/Mrp_TM"/>
</dbReference>
<dbReference type="NCBIfam" id="TIGR01770">
    <property type="entry name" value="NDH_I_N"/>
    <property type="match status" value="1"/>
</dbReference>
<dbReference type="NCBIfam" id="NF004439">
    <property type="entry name" value="PRK05777.1-1"/>
    <property type="match status" value="1"/>
</dbReference>
<dbReference type="PANTHER" id="PTHR22773">
    <property type="entry name" value="NADH DEHYDROGENASE"/>
    <property type="match status" value="1"/>
</dbReference>
<dbReference type="Pfam" id="PF00361">
    <property type="entry name" value="Proton_antipo_M"/>
    <property type="match status" value="1"/>
</dbReference>
<keyword id="KW-0997">Cell inner membrane</keyword>
<keyword id="KW-1003">Cell membrane</keyword>
<keyword id="KW-0472">Membrane</keyword>
<keyword id="KW-0520">NAD</keyword>
<keyword id="KW-0874">Quinone</keyword>
<keyword id="KW-1185">Reference proteome</keyword>
<keyword id="KW-1278">Translocase</keyword>
<keyword id="KW-0812">Transmembrane</keyword>
<keyword id="KW-1133">Transmembrane helix</keyword>
<keyword id="KW-0813">Transport</keyword>
<keyword id="KW-0830">Ubiquinone</keyword>
<comment type="function">
    <text evidence="1">NDH-1 shuttles electrons from NADH, via FMN and iron-sulfur (Fe-S) centers, to quinones in the respiratory chain. The immediate electron acceptor for the enzyme in this species is believed to be ubiquinone. Couples the redox reaction to proton translocation (for every two electrons transferred, four hydrogen ions are translocated across the cytoplasmic membrane), and thus conserves the redox energy in a proton gradient.</text>
</comment>
<comment type="catalytic activity">
    <reaction evidence="1">
        <text>a quinone + NADH + 5 H(+)(in) = a quinol + NAD(+) + 4 H(+)(out)</text>
        <dbReference type="Rhea" id="RHEA:57888"/>
        <dbReference type="ChEBI" id="CHEBI:15378"/>
        <dbReference type="ChEBI" id="CHEBI:24646"/>
        <dbReference type="ChEBI" id="CHEBI:57540"/>
        <dbReference type="ChEBI" id="CHEBI:57945"/>
        <dbReference type="ChEBI" id="CHEBI:132124"/>
    </reaction>
</comment>
<comment type="subunit">
    <text evidence="1">NDH-1 is composed of 13 different subunits. Subunits NuoA, H, J, K, L, M, N constitute the membrane sector of the complex.</text>
</comment>
<comment type="subcellular location">
    <subcellularLocation>
        <location evidence="1">Cell inner membrane</location>
        <topology evidence="1">Multi-pass membrane protein</topology>
    </subcellularLocation>
</comment>
<comment type="similarity">
    <text evidence="1">Belongs to the complex I subunit 2 family.</text>
</comment>